<sequence length="159" mass="18227">MNITLITVGKLKEKYLKDAVNEYAKRLQKYCKLNIIELQDEKTPEKASLKEEKLIKEKEGEKILSSIKDNSYVVSMDLKGKMFSSEEFSAFIDDLGVRGNSSIDFVIGGSLGLSDAVLARANYKLCFSKMTFPHQLFRVMLLEQVYRAFRISRGEPYHK</sequence>
<gene>
    <name evidence="1" type="primary">rlmH</name>
    <name type="ordered locus">CA_C3536</name>
</gene>
<feature type="chain" id="PRO_0000198108" description="Ribosomal RNA large subunit methyltransferase H">
    <location>
        <begin position="1"/>
        <end position="159"/>
    </location>
</feature>
<feature type="binding site" evidence="1">
    <location>
        <position position="108"/>
    </location>
    <ligand>
        <name>S-adenosyl-L-methionine</name>
        <dbReference type="ChEBI" id="CHEBI:59789"/>
    </ligand>
</feature>
<feature type="binding site" evidence="1">
    <location>
        <begin position="127"/>
        <end position="132"/>
    </location>
    <ligand>
        <name>S-adenosyl-L-methionine</name>
        <dbReference type="ChEBI" id="CHEBI:59789"/>
    </ligand>
</feature>
<comment type="function">
    <text evidence="1">Specifically methylates the pseudouridine at position 1915 (m3Psi1915) in 23S rRNA.</text>
</comment>
<comment type="catalytic activity">
    <reaction evidence="1">
        <text>pseudouridine(1915) in 23S rRNA + S-adenosyl-L-methionine = N(3)-methylpseudouridine(1915) in 23S rRNA + S-adenosyl-L-homocysteine + H(+)</text>
        <dbReference type="Rhea" id="RHEA:42752"/>
        <dbReference type="Rhea" id="RHEA-COMP:10221"/>
        <dbReference type="Rhea" id="RHEA-COMP:10222"/>
        <dbReference type="ChEBI" id="CHEBI:15378"/>
        <dbReference type="ChEBI" id="CHEBI:57856"/>
        <dbReference type="ChEBI" id="CHEBI:59789"/>
        <dbReference type="ChEBI" id="CHEBI:65314"/>
        <dbReference type="ChEBI" id="CHEBI:74486"/>
        <dbReference type="EC" id="2.1.1.177"/>
    </reaction>
</comment>
<comment type="subunit">
    <text evidence="1">Homodimer.</text>
</comment>
<comment type="subcellular location">
    <subcellularLocation>
        <location evidence="1">Cytoplasm</location>
    </subcellularLocation>
</comment>
<comment type="similarity">
    <text evidence="1">Belongs to the RNA methyltransferase RlmH family.</text>
</comment>
<evidence type="ECO:0000255" key="1">
    <source>
        <dbReference type="HAMAP-Rule" id="MF_00658"/>
    </source>
</evidence>
<reference key="1">
    <citation type="journal article" date="2001" name="J. Bacteriol.">
        <title>Genome sequence and comparative analysis of the solvent-producing bacterium Clostridium acetobutylicum.</title>
        <authorList>
            <person name="Noelling J."/>
            <person name="Breton G."/>
            <person name="Omelchenko M.V."/>
            <person name="Makarova K.S."/>
            <person name="Zeng Q."/>
            <person name="Gibson R."/>
            <person name="Lee H.M."/>
            <person name="Dubois J."/>
            <person name="Qiu D."/>
            <person name="Hitti J."/>
            <person name="Wolf Y.I."/>
            <person name="Tatusov R.L."/>
            <person name="Sabathe F."/>
            <person name="Doucette-Stamm L.A."/>
            <person name="Soucaille P."/>
            <person name="Daly M.J."/>
            <person name="Bennett G.N."/>
            <person name="Koonin E.V."/>
            <person name="Smith D.R."/>
        </authorList>
    </citation>
    <scope>NUCLEOTIDE SEQUENCE [LARGE SCALE GENOMIC DNA]</scope>
    <source>
        <strain>ATCC 824 / DSM 792 / JCM 1419 / IAM 19013 / LMG 5710 / NBRC 13948 / NRRL B-527 / VKM B-1787 / 2291 / W</strain>
    </source>
</reference>
<proteinExistence type="inferred from homology"/>
<name>RLMH_CLOAB</name>
<accession>Q97DE2</accession>
<protein>
    <recommendedName>
        <fullName evidence="1">Ribosomal RNA large subunit methyltransferase H</fullName>
        <ecNumber evidence="1">2.1.1.177</ecNumber>
    </recommendedName>
    <alternativeName>
        <fullName evidence="1">23S rRNA (pseudouridine1915-N3)-methyltransferase</fullName>
    </alternativeName>
    <alternativeName>
        <fullName evidence="1">23S rRNA m3Psi1915 methyltransferase</fullName>
    </alternativeName>
    <alternativeName>
        <fullName evidence="1">rRNA (pseudouridine-N3-)-methyltransferase RlmH</fullName>
    </alternativeName>
</protein>
<dbReference type="EC" id="2.1.1.177" evidence="1"/>
<dbReference type="EMBL" id="AE001437">
    <property type="protein sequence ID" value="AAK81461.1"/>
    <property type="molecule type" value="Genomic_DNA"/>
</dbReference>
<dbReference type="PIR" id="B97334">
    <property type="entry name" value="B97334"/>
</dbReference>
<dbReference type="RefSeq" id="NP_350121.1">
    <property type="nucleotide sequence ID" value="NC_003030.1"/>
</dbReference>
<dbReference type="RefSeq" id="WP_010966801.1">
    <property type="nucleotide sequence ID" value="NC_003030.1"/>
</dbReference>
<dbReference type="SMR" id="Q97DE2"/>
<dbReference type="STRING" id="272562.CA_C3536"/>
<dbReference type="GeneID" id="45000027"/>
<dbReference type="KEGG" id="cac:CA_C3536"/>
<dbReference type="PATRIC" id="fig|272562.8.peg.3725"/>
<dbReference type="eggNOG" id="COG1576">
    <property type="taxonomic scope" value="Bacteria"/>
</dbReference>
<dbReference type="HOGENOM" id="CLU_100552_0_0_9"/>
<dbReference type="OrthoDB" id="9806643at2"/>
<dbReference type="Proteomes" id="UP000000814">
    <property type="component" value="Chromosome"/>
</dbReference>
<dbReference type="GO" id="GO:0005737">
    <property type="term" value="C:cytoplasm"/>
    <property type="evidence" value="ECO:0007669"/>
    <property type="project" value="UniProtKB-SubCell"/>
</dbReference>
<dbReference type="GO" id="GO:0070038">
    <property type="term" value="F:rRNA (pseudouridine-N3-)-methyltransferase activity"/>
    <property type="evidence" value="ECO:0007669"/>
    <property type="project" value="UniProtKB-UniRule"/>
</dbReference>
<dbReference type="CDD" id="cd18081">
    <property type="entry name" value="RlmH-like"/>
    <property type="match status" value="1"/>
</dbReference>
<dbReference type="Gene3D" id="3.40.1280.10">
    <property type="match status" value="1"/>
</dbReference>
<dbReference type="HAMAP" id="MF_00658">
    <property type="entry name" value="23SrRNA_methyltr_H"/>
    <property type="match status" value="1"/>
</dbReference>
<dbReference type="InterPro" id="IPR029028">
    <property type="entry name" value="Alpha/beta_knot_MTases"/>
</dbReference>
<dbReference type="InterPro" id="IPR003742">
    <property type="entry name" value="RlmH-like"/>
</dbReference>
<dbReference type="InterPro" id="IPR029026">
    <property type="entry name" value="tRNA_m1G_MTases_N"/>
</dbReference>
<dbReference type="NCBIfam" id="NF000985">
    <property type="entry name" value="PRK00103.1-3"/>
    <property type="match status" value="1"/>
</dbReference>
<dbReference type="NCBIfam" id="TIGR00246">
    <property type="entry name" value="tRNA_RlmH_YbeA"/>
    <property type="match status" value="1"/>
</dbReference>
<dbReference type="PANTHER" id="PTHR33603">
    <property type="entry name" value="METHYLTRANSFERASE"/>
    <property type="match status" value="1"/>
</dbReference>
<dbReference type="PANTHER" id="PTHR33603:SF1">
    <property type="entry name" value="RIBOSOMAL RNA LARGE SUBUNIT METHYLTRANSFERASE H"/>
    <property type="match status" value="1"/>
</dbReference>
<dbReference type="Pfam" id="PF02590">
    <property type="entry name" value="SPOUT_MTase"/>
    <property type="match status" value="1"/>
</dbReference>
<dbReference type="PIRSF" id="PIRSF004505">
    <property type="entry name" value="MT_bac"/>
    <property type="match status" value="1"/>
</dbReference>
<dbReference type="SUPFAM" id="SSF75217">
    <property type="entry name" value="alpha/beta knot"/>
    <property type="match status" value="1"/>
</dbReference>
<organism>
    <name type="scientific">Clostridium acetobutylicum (strain ATCC 824 / DSM 792 / JCM 1419 / IAM 19013 / LMG 5710 / NBRC 13948 / NRRL B-527 / VKM B-1787 / 2291 / W)</name>
    <dbReference type="NCBI Taxonomy" id="272562"/>
    <lineage>
        <taxon>Bacteria</taxon>
        <taxon>Bacillati</taxon>
        <taxon>Bacillota</taxon>
        <taxon>Clostridia</taxon>
        <taxon>Eubacteriales</taxon>
        <taxon>Clostridiaceae</taxon>
        <taxon>Clostridium</taxon>
    </lineage>
</organism>
<keyword id="KW-0963">Cytoplasm</keyword>
<keyword id="KW-0489">Methyltransferase</keyword>
<keyword id="KW-1185">Reference proteome</keyword>
<keyword id="KW-0698">rRNA processing</keyword>
<keyword id="KW-0949">S-adenosyl-L-methionine</keyword>
<keyword id="KW-0808">Transferase</keyword>